<name>Y3309_LEGPC</name>
<feature type="chain" id="PRO_0000336194" description="UPF0102 protein LPC_3309">
    <location>
        <begin position="1"/>
        <end position="118"/>
    </location>
</feature>
<dbReference type="EMBL" id="CP000675">
    <property type="protein sequence ID" value="ABQ57195.1"/>
    <property type="molecule type" value="Genomic_DNA"/>
</dbReference>
<dbReference type="RefSeq" id="WP_011947884.1">
    <property type="nucleotide sequence ID" value="NZ_JAPMSS010000003.1"/>
</dbReference>
<dbReference type="SMR" id="A5IIJ5"/>
<dbReference type="KEGG" id="lpc:LPC_3309"/>
<dbReference type="HOGENOM" id="CLU_115353_1_0_6"/>
<dbReference type="GO" id="GO:0003676">
    <property type="term" value="F:nucleic acid binding"/>
    <property type="evidence" value="ECO:0007669"/>
    <property type="project" value="InterPro"/>
</dbReference>
<dbReference type="CDD" id="cd20736">
    <property type="entry name" value="PoNe_Nuclease"/>
    <property type="match status" value="1"/>
</dbReference>
<dbReference type="Gene3D" id="3.40.1350.10">
    <property type="match status" value="1"/>
</dbReference>
<dbReference type="HAMAP" id="MF_00048">
    <property type="entry name" value="UPF0102"/>
    <property type="match status" value="1"/>
</dbReference>
<dbReference type="InterPro" id="IPR011335">
    <property type="entry name" value="Restrct_endonuc-II-like"/>
</dbReference>
<dbReference type="InterPro" id="IPR011856">
    <property type="entry name" value="tRNA_endonuc-like_dom_sf"/>
</dbReference>
<dbReference type="InterPro" id="IPR003509">
    <property type="entry name" value="UPF0102_YraN-like"/>
</dbReference>
<dbReference type="NCBIfam" id="NF009150">
    <property type="entry name" value="PRK12497.1-3"/>
    <property type="match status" value="1"/>
</dbReference>
<dbReference type="NCBIfam" id="TIGR00252">
    <property type="entry name" value="YraN family protein"/>
    <property type="match status" value="1"/>
</dbReference>
<dbReference type="PANTHER" id="PTHR34039">
    <property type="entry name" value="UPF0102 PROTEIN YRAN"/>
    <property type="match status" value="1"/>
</dbReference>
<dbReference type="PANTHER" id="PTHR34039:SF1">
    <property type="entry name" value="UPF0102 PROTEIN YRAN"/>
    <property type="match status" value="1"/>
</dbReference>
<dbReference type="Pfam" id="PF02021">
    <property type="entry name" value="UPF0102"/>
    <property type="match status" value="1"/>
</dbReference>
<dbReference type="SUPFAM" id="SSF52980">
    <property type="entry name" value="Restriction endonuclease-like"/>
    <property type="match status" value="1"/>
</dbReference>
<proteinExistence type="inferred from homology"/>
<gene>
    <name type="ordered locus">LPC_3309</name>
</gene>
<evidence type="ECO:0000255" key="1">
    <source>
        <dbReference type="HAMAP-Rule" id="MF_00048"/>
    </source>
</evidence>
<comment type="similarity">
    <text evidence="1">Belongs to the UPF0102 family.</text>
</comment>
<accession>A5IIJ5</accession>
<protein>
    <recommendedName>
        <fullName evidence="1">UPF0102 protein LPC_3309</fullName>
    </recommendedName>
</protein>
<sequence length="118" mass="13605">MTQEKGKFAEQLALNYLKENGLALVMQNYHCRLGEIDLIMREGSYLVFIEVRSRSNMNFGGGLASITYEKKQKIIKATSHYMIKYRIQDKFPIRFDVISIDGKSNKITWLKNAFDAGC</sequence>
<organism>
    <name type="scientific">Legionella pneumophila (strain Corby)</name>
    <dbReference type="NCBI Taxonomy" id="400673"/>
    <lineage>
        <taxon>Bacteria</taxon>
        <taxon>Pseudomonadati</taxon>
        <taxon>Pseudomonadota</taxon>
        <taxon>Gammaproteobacteria</taxon>
        <taxon>Legionellales</taxon>
        <taxon>Legionellaceae</taxon>
        <taxon>Legionella</taxon>
    </lineage>
</organism>
<reference key="1">
    <citation type="submission" date="2006-11" db="EMBL/GenBank/DDBJ databases">
        <title>Identification and characterization of a new conjugation/ type IVA secretion system (trb/tra) of L. pneumophila Corby localized on a mobile genomic island.</title>
        <authorList>
            <person name="Gloeckner G."/>
            <person name="Albert-Weissenberger C."/>
            <person name="Weinmann E."/>
            <person name="Jacobi S."/>
            <person name="Schunder E."/>
            <person name="Steinert M."/>
            <person name="Buchrieser C."/>
            <person name="Hacker J."/>
            <person name="Heuner K."/>
        </authorList>
    </citation>
    <scope>NUCLEOTIDE SEQUENCE [LARGE SCALE GENOMIC DNA]</scope>
    <source>
        <strain>Corby</strain>
    </source>
</reference>